<evidence type="ECO:0000255" key="1">
    <source>
        <dbReference type="HAMAP-Rule" id="MF_00028"/>
    </source>
</evidence>
<comment type="function">
    <text evidence="1">Catalyzes amidations at positions B, D, E, and G on adenosylcobyrinic A,C-diamide. NH(2) groups are provided by glutamine, and one molecule of ATP is hydrogenolyzed for each amidation.</text>
</comment>
<comment type="pathway">
    <text evidence="1">Cofactor biosynthesis; adenosylcobalamin biosynthesis.</text>
</comment>
<comment type="similarity">
    <text evidence="1">Belongs to the CobB/CobQ family. CobQ subfamily.</text>
</comment>
<keyword id="KW-0169">Cobalamin biosynthesis</keyword>
<keyword id="KW-0315">Glutamine amidotransferase</keyword>
<keyword id="KW-1185">Reference proteome</keyword>
<reference key="1">
    <citation type="journal article" date="2011" name="MBio">
        <title>Novel metabolic attributes of the genus Cyanothece, comprising a group of unicellular nitrogen-fixing Cyanobacteria.</title>
        <authorList>
            <person name="Bandyopadhyay A."/>
            <person name="Elvitigala T."/>
            <person name="Welsh E."/>
            <person name="Stockel J."/>
            <person name="Liberton M."/>
            <person name="Min H."/>
            <person name="Sherman L.A."/>
            <person name="Pakrasi H.B."/>
        </authorList>
    </citation>
    <scope>NUCLEOTIDE SEQUENCE [LARGE SCALE GENOMIC DNA]</scope>
    <source>
        <strain>PCC 7424</strain>
    </source>
</reference>
<organism>
    <name type="scientific">Gloeothece citriformis (strain PCC 7424)</name>
    <name type="common">Cyanothece sp. (strain PCC 7424)</name>
    <dbReference type="NCBI Taxonomy" id="65393"/>
    <lineage>
        <taxon>Bacteria</taxon>
        <taxon>Bacillati</taxon>
        <taxon>Cyanobacteriota</taxon>
        <taxon>Cyanophyceae</taxon>
        <taxon>Oscillatoriophycideae</taxon>
        <taxon>Chroococcales</taxon>
        <taxon>Aphanothecaceae</taxon>
        <taxon>Gloeothece</taxon>
        <taxon>Gloeothece citriformis</taxon>
    </lineage>
</organism>
<sequence length="495" mass="54283">MKAIMVVGTTSHAGKSFLTTALCRILARRGWHVTPFKGQNMALNSYVTPTGGEMGFAQAVQAWAAGTAPRVEMNPILLKPQGNMTSQVILMGKVAGQTTASDYYEQYFKPGWEAIASALKRLAFEYDLVICEGAGSPAEINLKHRDLTNMRVAQHLGATTLLVVDIDRGGAFAHVVGTLALLDPEERALIKGIIINKFRGQRSLLDSGIKWLEDYTGIPVLGVIPWSEILFPAEDSLDLFERKTKPNGEININVIRLPRISNFTDFDALESEPTVSLNYLDLSQELGYPDAVIIPGSKTTIQDLSALHTSGMAEKLEQYANAGGIVLGICGGFQMLGRRVLDPNQIEGKQEEFAGLNLLPIETTILPDKITTQRQVFSNHPQSGLPVTGYEIHQGITRLADGVKNLENVGCQALFNDEKLGIVTHSQLVWGCYLHGLFDNGAWRRAWLNFLRHRRGLSALPTGIPNYREQREATLNSVADLVEANVNLSPILSQL</sequence>
<accession>B7KHS7</accession>
<proteinExistence type="inferred from homology"/>
<name>COBQ_GLOC7</name>
<feature type="chain" id="PRO_1000116433" description="Cobyric acid synthase">
    <location>
        <begin position="1"/>
        <end position="495"/>
    </location>
</feature>
<feature type="domain" description="GATase cobBQ-type" evidence="1">
    <location>
        <begin position="249"/>
        <end position="443"/>
    </location>
</feature>
<feature type="active site" description="Nucleophile" evidence="1">
    <location>
        <position position="330"/>
    </location>
</feature>
<feature type="active site" evidence="1">
    <location>
        <position position="435"/>
    </location>
</feature>
<dbReference type="EMBL" id="CP001291">
    <property type="protein sequence ID" value="ACK72024.1"/>
    <property type="molecule type" value="Genomic_DNA"/>
</dbReference>
<dbReference type="RefSeq" id="WP_015955617.1">
    <property type="nucleotide sequence ID" value="NC_011729.1"/>
</dbReference>
<dbReference type="SMR" id="B7KHS7"/>
<dbReference type="STRING" id="65393.PCC7424_3640"/>
<dbReference type="KEGG" id="cyc:PCC7424_3640"/>
<dbReference type="eggNOG" id="COG1492">
    <property type="taxonomic scope" value="Bacteria"/>
</dbReference>
<dbReference type="HOGENOM" id="CLU_019250_2_2_3"/>
<dbReference type="OrthoDB" id="9808302at2"/>
<dbReference type="UniPathway" id="UPA00148"/>
<dbReference type="Proteomes" id="UP000002384">
    <property type="component" value="Chromosome"/>
</dbReference>
<dbReference type="GO" id="GO:0015420">
    <property type="term" value="F:ABC-type vitamin B12 transporter activity"/>
    <property type="evidence" value="ECO:0007669"/>
    <property type="project" value="UniProtKB-UniRule"/>
</dbReference>
<dbReference type="GO" id="GO:0003824">
    <property type="term" value="F:catalytic activity"/>
    <property type="evidence" value="ECO:0007669"/>
    <property type="project" value="InterPro"/>
</dbReference>
<dbReference type="GO" id="GO:0009236">
    <property type="term" value="P:cobalamin biosynthetic process"/>
    <property type="evidence" value="ECO:0007669"/>
    <property type="project" value="UniProtKB-UniRule"/>
</dbReference>
<dbReference type="CDD" id="cd05389">
    <property type="entry name" value="CobQ_N"/>
    <property type="match status" value="1"/>
</dbReference>
<dbReference type="CDD" id="cd01750">
    <property type="entry name" value="GATase1_CobQ"/>
    <property type="match status" value="1"/>
</dbReference>
<dbReference type="Gene3D" id="3.40.50.880">
    <property type="match status" value="1"/>
</dbReference>
<dbReference type="Gene3D" id="3.40.50.300">
    <property type="entry name" value="P-loop containing nucleotide triphosphate hydrolases"/>
    <property type="match status" value="1"/>
</dbReference>
<dbReference type="HAMAP" id="MF_00028">
    <property type="entry name" value="CobQ"/>
    <property type="match status" value="1"/>
</dbReference>
<dbReference type="InterPro" id="IPR029062">
    <property type="entry name" value="Class_I_gatase-like"/>
</dbReference>
<dbReference type="InterPro" id="IPR002586">
    <property type="entry name" value="CobQ/CobB/MinD/ParA_Nub-bd_dom"/>
</dbReference>
<dbReference type="InterPro" id="IPR033949">
    <property type="entry name" value="CobQ_GATase1"/>
</dbReference>
<dbReference type="InterPro" id="IPR047045">
    <property type="entry name" value="CobQ_N"/>
</dbReference>
<dbReference type="InterPro" id="IPR004459">
    <property type="entry name" value="CobQ_synth"/>
</dbReference>
<dbReference type="InterPro" id="IPR011698">
    <property type="entry name" value="GATase_3"/>
</dbReference>
<dbReference type="InterPro" id="IPR027417">
    <property type="entry name" value="P-loop_NTPase"/>
</dbReference>
<dbReference type="NCBIfam" id="TIGR00313">
    <property type="entry name" value="cobQ"/>
    <property type="match status" value="1"/>
</dbReference>
<dbReference type="NCBIfam" id="NF001989">
    <property type="entry name" value="PRK00784.1"/>
    <property type="match status" value="1"/>
</dbReference>
<dbReference type="PANTHER" id="PTHR21343:SF1">
    <property type="entry name" value="COBYRIC ACID SYNTHASE"/>
    <property type="match status" value="1"/>
</dbReference>
<dbReference type="PANTHER" id="PTHR21343">
    <property type="entry name" value="DETHIOBIOTIN SYNTHETASE"/>
    <property type="match status" value="1"/>
</dbReference>
<dbReference type="Pfam" id="PF01656">
    <property type="entry name" value="CbiA"/>
    <property type="match status" value="1"/>
</dbReference>
<dbReference type="Pfam" id="PF07685">
    <property type="entry name" value="GATase_3"/>
    <property type="match status" value="1"/>
</dbReference>
<dbReference type="SUPFAM" id="SSF52317">
    <property type="entry name" value="Class I glutamine amidotransferase-like"/>
    <property type="match status" value="1"/>
</dbReference>
<dbReference type="SUPFAM" id="SSF52540">
    <property type="entry name" value="P-loop containing nucleoside triphosphate hydrolases"/>
    <property type="match status" value="1"/>
</dbReference>
<dbReference type="PROSITE" id="PS51274">
    <property type="entry name" value="GATASE_COBBQ"/>
    <property type="match status" value="1"/>
</dbReference>
<protein>
    <recommendedName>
        <fullName evidence="1">Cobyric acid synthase</fullName>
    </recommendedName>
</protein>
<gene>
    <name evidence="1" type="primary">cobQ</name>
    <name type="ordered locus">PCC7424_3640</name>
</gene>